<proteinExistence type="evidence at protein level"/>
<organism>
    <name type="scientific">Arabidopsis thaliana</name>
    <name type="common">Mouse-ear cress</name>
    <dbReference type="NCBI Taxonomy" id="3702"/>
    <lineage>
        <taxon>Eukaryota</taxon>
        <taxon>Viridiplantae</taxon>
        <taxon>Streptophyta</taxon>
        <taxon>Embryophyta</taxon>
        <taxon>Tracheophyta</taxon>
        <taxon>Spermatophyta</taxon>
        <taxon>Magnoliopsida</taxon>
        <taxon>eudicotyledons</taxon>
        <taxon>Gunneridae</taxon>
        <taxon>Pentapetalae</taxon>
        <taxon>rosids</taxon>
        <taxon>malvids</taxon>
        <taxon>Brassicales</taxon>
        <taxon>Brassicaceae</taxon>
        <taxon>Camelineae</taxon>
        <taxon>Arabidopsis</taxon>
    </lineage>
</organism>
<accession>Q9FV02</accession>
<accession>F4IQC4</accession>
<accession>Q9ZVQ7</accession>
<sequence>MIRLRTLIEKNRSESRKKIVSSTLDSLPEGCISNIISFTSPEDACVAAAVSKIFESAVKSDIVWEKFLPTDYESLITPSRVFSSKKELYFSLCNDPLLIEDGKMSLWLEKASGKRCIMLSATAMNLSSMADMSQRFLWIPCPESRFETVAALREAYRFEFNCRMNTRVLSLRTRYSVYIVFKKADNWCGFKGVSIEAVVGIVGEESFRSFICFDTHGKGQARKRKVVAKPELREDGWMETEIGEFYNEGGLMSSDEVEISTVEGKYAQQKRGLVILGIEIRPAKILEEFSVCRL</sequence>
<evidence type="ECO:0000250" key="1"/>
<evidence type="ECO:0000255" key="2">
    <source>
        <dbReference type="PROSITE-ProRule" id="PRU00080"/>
    </source>
</evidence>
<evidence type="ECO:0000269" key="3">
    <source>
    </source>
</evidence>
<evidence type="ECO:0000305" key="4"/>
<keyword id="KW-1185">Reference proteome</keyword>
<keyword id="KW-0833">Ubl conjugation pathway</keyword>
<dbReference type="EMBL" id="AC005312">
    <property type="protein sequence ID" value="AAC78517.2"/>
    <property type="status" value="ALT_SEQ"/>
    <property type="molecule type" value="Genomic_DNA"/>
</dbReference>
<dbReference type="EMBL" id="CP002685">
    <property type="protein sequence ID" value="ANM61389.1"/>
    <property type="molecule type" value="Genomic_DNA"/>
</dbReference>
<dbReference type="EMBL" id="AF263379">
    <property type="protein sequence ID" value="AAG21978.1"/>
    <property type="status" value="ALT_INIT"/>
    <property type="molecule type" value="mRNA"/>
</dbReference>
<dbReference type="PIR" id="F84435">
    <property type="entry name" value="F84435"/>
</dbReference>
<dbReference type="RefSeq" id="NP_001318181.1">
    <property type="nucleotide sequence ID" value="NM_001335105.1"/>
</dbReference>
<dbReference type="RefSeq" id="NP_565282.3">
    <property type="nucleotide sequence ID" value="NM_126292.3"/>
</dbReference>
<dbReference type="SMR" id="Q9FV02"/>
<dbReference type="BioGRID" id="169">
    <property type="interactions" value="1"/>
</dbReference>
<dbReference type="STRING" id="3702.Q9FV02"/>
<dbReference type="PaxDb" id="3702-AT2G02350.1"/>
<dbReference type="ProteomicsDB" id="234569"/>
<dbReference type="EnsemblPlants" id="AT2G02350.2">
    <property type="protein sequence ID" value="AT2G02350.2"/>
    <property type="gene ID" value="AT2G02350"/>
</dbReference>
<dbReference type="GeneID" id="814766"/>
<dbReference type="Gramene" id="AT2G02350.2">
    <property type="protein sequence ID" value="AT2G02350.2"/>
    <property type="gene ID" value="AT2G02350"/>
</dbReference>
<dbReference type="KEGG" id="ath:AT2G02350"/>
<dbReference type="Araport" id="AT2G02350"/>
<dbReference type="TAIR" id="AT2G02350">
    <property type="gene designation" value="SKIP3"/>
</dbReference>
<dbReference type="eggNOG" id="ENOG502QRA4">
    <property type="taxonomic scope" value="Eukaryota"/>
</dbReference>
<dbReference type="HOGENOM" id="CLU_050973_3_0_1"/>
<dbReference type="InParanoid" id="Q9FV02"/>
<dbReference type="OMA" id="KYNTINQ"/>
<dbReference type="OrthoDB" id="1062652at2759"/>
<dbReference type="PhylomeDB" id="Q9FV02"/>
<dbReference type="UniPathway" id="UPA00143"/>
<dbReference type="PRO" id="PR:Q9FV02"/>
<dbReference type="Proteomes" id="UP000006548">
    <property type="component" value="Chromosome 2"/>
</dbReference>
<dbReference type="ExpressionAtlas" id="Q9FV02">
    <property type="expression patterns" value="baseline and differential"/>
</dbReference>
<dbReference type="GO" id="GO:0016567">
    <property type="term" value="P:protein ubiquitination"/>
    <property type="evidence" value="ECO:0007669"/>
    <property type="project" value="UniProtKB-UniPathway"/>
</dbReference>
<dbReference type="CDD" id="cd22162">
    <property type="entry name" value="F-box_AtSKIP3-like"/>
    <property type="match status" value="1"/>
</dbReference>
<dbReference type="FunFam" id="1.20.1280.50:FF:000112">
    <property type="entry name" value="F-box protein PP2-B1"/>
    <property type="match status" value="1"/>
</dbReference>
<dbReference type="Gene3D" id="1.20.1280.50">
    <property type="match status" value="1"/>
</dbReference>
<dbReference type="InterPro" id="IPR036047">
    <property type="entry name" value="F-box-like_dom_sf"/>
</dbReference>
<dbReference type="InterPro" id="IPR001810">
    <property type="entry name" value="F-box_dom"/>
</dbReference>
<dbReference type="InterPro" id="IPR025886">
    <property type="entry name" value="PP2-like"/>
</dbReference>
<dbReference type="PANTHER" id="PTHR32278">
    <property type="entry name" value="F-BOX DOMAIN-CONTAINING PROTEIN"/>
    <property type="match status" value="1"/>
</dbReference>
<dbReference type="PANTHER" id="PTHR32278:SF119">
    <property type="entry name" value="F-BOX PROTEIN PP2-B10-RELATED"/>
    <property type="match status" value="1"/>
</dbReference>
<dbReference type="Pfam" id="PF00646">
    <property type="entry name" value="F-box"/>
    <property type="match status" value="1"/>
</dbReference>
<dbReference type="Pfam" id="PF14299">
    <property type="entry name" value="PP2"/>
    <property type="match status" value="1"/>
</dbReference>
<dbReference type="SMART" id="SM00256">
    <property type="entry name" value="FBOX"/>
    <property type="match status" value="1"/>
</dbReference>
<dbReference type="SUPFAM" id="SSF81383">
    <property type="entry name" value="F-box domain"/>
    <property type="match status" value="1"/>
</dbReference>
<dbReference type="PROSITE" id="PS50181">
    <property type="entry name" value="FBOX"/>
    <property type="match status" value="1"/>
</dbReference>
<comment type="pathway">
    <text>Protein modification; protein ubiquitination.</text>
</comment>
<comment type="subunit">
    <text evidence="1 3">Part of a SCF (SKP1-cullin-F-box) protein ligase complex (By similarity). Interacts with SKP1A/ASK1.</text>
</comment>
<comment type="sequence caution" evidence="4">
    <conflict type="erroneous gene model prediction">
        <sequence resource="EMBL-CDS" id="AAC78517"/>
    </conflict>
</comment>
<comment type="sequence caution" evidence="4">
    <conflict type="erroneous initiation">
        <sequence resource="EMBL-CDS" id="AAG21978"/>
    </conflict>
    <text>Truncated N-terminus.</text>
</comment>
<protein>
    <recommendedName>
        <fullName>F-box protein SKIP3</fullName>
    </recommendedName>
    <alternativeName>
        <fullName>F-box protein PP2-B9</fullName>
    </alternativeName>
    <alternativeName>
        <fullName>Protein PHLOEM PROTEIN 2-LIKE B9</fullName>
    </alternativeName>
    <alternativeName>
        <fullName>SKP1-interacting partner 3</fullName>
    </alternativeName>
</protein>
<gene>
    <name type="primary">SKIP3</name>
    <name type="synonym">PP2B9</name>
    <name type="ordered locus">At2g02350</name>
    <name type="ORF">T16F16.14</name>
</gene>
<name>SKIP3_ARATH</name>
<reference key="1">
    <citation type="journal article" date="1999" name="Nature">
        <title>Sequence and analysis of chromosome 2 of the plant Arabidopsis thaliana.</title>
        <authorList>
            <person name="Lin X."/>
            <person name="Kaul S."/>
            <person name="Rounsley S.D."/>
            <person name="Shea T.P."/>
            <person name="Benito M.-I."/>
            <person name="Town C.D."/>
            <person name="Fujii C.Y."/>
            <person name="Mason T.M."/>
            <person name="Bowman C.L."/>
            <person name="Barnstead M.E."/>
            <person name="Feldblyum T.V."/>
            <person name="Buell C.R."/>
            <person name="Ketchum K.A."/>
            <person name="Lee J.J."/>
            <person name="Ronning C.M."/>
            <person name="Koo H.L."/>
            <person name="Moffat K.S."/>
            <person name="Cronin L.A."/>
            <person name="Shen M."/>
            <person name="Pai G."/>
            <person name="Van Aken S."/>
            <person name="Umayam L."/>
            <person name="Tallon L.J."/>
            <person name="Gill J.E."/>
            <person name="Adams M.D."/>
            <person name="Carrera A.J."/>
            <person name="Creasy T.H."/>
            <person name="Goodman H.M."/>
            <person name="Somerville C.R."/>
            <person name="Copenhaver G.P."/>
            <person name="Preuss D."/>
            <person name="Nierman W.C."/>
            <person name="White O."/>
            <person name="Eisen J.A."/>
            <person name="Salzberg S.L."/>
            <person name="Fraser C.M."/>
            <person name="Venter J.C."/>
        </authorList>
    </citation>
    <scope>NUCLEOTIDE SEQUENCE [LARGE SCALE GENOMIC DNA]</scope>
    <source>
        <strain>cv. Columbia</strain>
    </source>
</reference>
<reference key="2">
    <citation type="journal article" date="2017" name="Plant J.">
        <title>Araport11: a complete reannotation of the Arabidopsis thaliana reference genome.</title>
        <authorList>
            <person name="Cheng C.Y."/>
            <person name="Krishnakumar V."/>
            <person name="Chan A.P."/>
            <person name="Thibaud-Nissen F."/>
            <person name="Schobel S."/>
            <person name="Town C.D."/>
        </authorList>
    </citation>
    <scope>GENOME REANNOTATION</scope>
    <source>
        <strain>cv. Columbia</strain>
    </source>
</reference>
<reference key="3">
    <citation type="journal article" date="2001" name="EMBO J.">
        <title>SKP1-SnRK protein kinase interactions mediate proteasomal binding of a plant SCF ubiquitin ligase.</title>
        <authorList>
            <person name="Farras R."/>
            <person name="Ferrando A."/>
            <person name="Jasik J."/>
            <person name="Kleinow T."/>
            <person name="Oekresz L."/>
            <person name="Tiburcio A."/>
            <person name="Salchert K."/>
            <person name="del Pozo C."/>
            <person name="Schell J."/>
            <person name="Koncz C."/>
        </authorList>
    </citation>
    <scope>NUCLEOTIDE SEQUENCE [MRNA] OF 10-285</scope>
    <scope>INTERACTION WITH SKP1A/ASK1</scope>
</reference>
<reference key="4">
    <citation type="journal article" date="2003" name="Plant Physiol.">
        <title>Diversity of the superfamily of phloem lectins (phloem protein 2) in angiosperms.</title>
        <authorList>
            <person name="Dinant S."/>
            <person name="Clark A.M."/>
            <person name="Zhu Y."/>
            <person name="Vilaine F."/>
            <person name="Palauqui J.-C."/>
            <person name="Kusiak C."/>
            <person name="Thompson G.A."/>
        </authorList>
    </citation>
    <scope>GENE FAMILY</scope>
    <scope>NOMENCLATURE</scope>
</reference>
<feature type="chain" id="PRO_0000272225" description="F-box protein SKIP3">
    <location>
        <begin position="1"/>
        <end position="294"/>
    </location>
</feature>
<feature type="domain" description="F-box" evidence="2">
    <location>
        <begin position="21"/>
        <end position="67"/>
    </location>
</feature>